<gene>
    <name evidence="1" type="primary">acpS</name>
    <name type="ordered locus">Neut_1775</name>
</gene>
<feature type="chain" id="PRO_1000008462" description="Holo-[acyl-carrier-protein] synthase">
    <location>
        <begin position="1"/>
        <end position="125"/>
    </location>
</feature>
<feature type="binding site" evidence="1">
    <location>
        <position position="8"/>
    </location>
    <ligand>
        <name>Mg(2+)</name>
        <dbReference type="ChEBI" id="CHEBI:18420"/>
    </ligand>
</feature>
<feature type="binding site" evidence="1">
    <location>
        <position position="57"/>
    </location>
    <ligand>
        <name>Mg(2+)</name>
        <dbReference type="ChEBI" id="CHEBI:18420"/>
    </ligand>
</feature>
<keyword id="KW-0963">Cytoplasm</keyword>
<keyword id="KW-0275">Fatty acid biosynthesis</keyword>
<keyword id="KW-0276">Fatty acid metabolism</keyword>
<keyword id="KW-0444">Lipid biosynthesis</keyword>
<keyword id="KW-0443">Lipid metabolism</keyword>
<keyword id="KW-0460">Magnesium</keyword>
<keyword id="KW-0479">Metal-binding</keyword>
<keyword id="KW-0808">Transferase</keyword>
<reference key="1">
    <citation type="journal article" date="2007" name="Environ. Microbiol.">
        <title>Whole-genome analysis of the ammonia-oxidizing bacterium, Nitrosomonas eutropha C91: implications for niche adaptation.</title>
        <authorList>
            <person name="Stein L.Y."/>
            <person name="Arp D.J."/>
            <person name="Berube P.M."/>
            <person name="Chain P.S."/>
            <person name="Hauser L."/>
            <person name="Jetten M.S."/>
            <person name="Klotz M.G."/>
            <person name="Larimer F.W."/>
            <person name="Norton J.M."/>
            <person name="Op den Camp H.J.M."/>
            <person name="Shin M."/>
            <person name="Wei X."/>
        </authorList>
    </citation>
    <scope>NUCLEOTIDE SEQUENCE [LARGE SCALE GENOMIC DNA]</scope>
    <source>
        <strain>DSM 101675 / C91 / Nm57</strain>
    </source>
</reference>
<organism>
    <name type="scientific">Nitrosomonas eutropha (strain DSM 101675 / C91 / Nm57)</name>
    <dbReference type="NCBI Taxonomy" id="335283"/>
    <lineage>
        <taxon>Bacteria</taxon>
        <taxon>Pseudomonadati</taxon>
        <taxon>Pseudomonadota</taxon>
        <taxon>Betaproteobacteria</taxon>
        <taxon>Nitrosomonadales</taxon>
        <taxon>Nitrosomonadaceae</taxon>
        <taxon>Nitrosomonas</taxon>
    </lineage>
</organism>
<accession>Q0AF73</accession>
<protein>
    <recommendedName>
        <fullName evidence="1">Holo-[acyl-carrier-protein] synthase</fullName>
        <shortName evidence="1">Holo-ACP synthase</shortName>
        <ecNumber evidence="1">2.7.8.7</ecNumber>
    </recommendedName>
    <alternativeName>
        <fullName evidence="1">4'-phosphopantetheinyl transferase AcpS</fullName>
    </alternativeName>
</protein>
<evidence type="ECO:0000255" key="1">
    <source>
        <dbReference type="HAMAP-Rule" id="MF_00101"/>
    </source>
</evidence>
<proteinExistence type="inferred from homology"/>
<name>ACPS_NITEC</name>
<dbReference type="EC" id="2.7.8.7" evidence="1"/>
<dbReference type="EMBL" id="CP000450">
    <property type="protein sequence ID" value="ABI60009.1"/>
    <property type="molecule type" value="Genomic_DNA"/>
</dbReference>
<dbReference type="RefSeq" id="WP_011634815.1">
    <property type="nucleotide sequence ID" value="NC_008344.1"/>
</dbReference>
<dbReference type="SMR" id="Q0AF73"/>
<dbReference type="STRING" id="335283.Neut_1775"/>
<dbReference type="KEGG" id="net:Neut_1775"/>
<dbReference type="eggNOG" id="COG0736">
    <property type="taxonomic scope" value="Bacteria"/>
</dbReference>
<dbReference type="HOGENOM" id="CLU_089696_3_1_4"/>
<dbReference type="OrthoDB" id="517356at2"/>
<dbReference type="Proteomes" id="UP000001966">
    <property type="component" value="Chromosome"/>
</dbReference>
<dbReference type="GO" id="GO:0005737">
    <property type="term" value="C:cytoplasm"/>
    <property type="evidence" value="ECO:0007669"/>
    <property type="project" value="UniProtKB-SubCell"/>
</dbReference>
<dbReference type="GO" id="GO:0008897">
    <property type="term" value="F:holo-[acyl-carrier-protein] synthase activity"/>
    <property type="evidence" value="ECO:0007669"/>
    <property type="project" value="UniProtKB-UniRule"/>
</dbReference>
<dbReference type="GO" id="GO:0000287">
    <property type="term" value="F:magnesium ion binding"/>
    <property type="evidence" value="ECO:0007669"/>
    <property type="project" value="UniProtKB-UniRule"/>
</dbReference>
<dbReference type="GO" id="GO:0006633">
    <property type="term" value="P:fatty acid biosynthetic process"/>
    <property type="evidence" value="ECO:0007669"/>
    <property type="project" value="UniProtKB-UniRule"/>
</dbReference>
<dbReference type="Gene3D" id="3.90.470.20">
    <property type="entry name" value="4'-phosphopantetheinyl transferase domain"/>
    <property type="match status" value="1"/>
</dbReference>
<dbReference type="HAMAP" id="MF_00101">
    <property type="entry name" value="AcpS"/>
    <property type="match status" value="1"/>
</dbReference>
<dbReference type="InterPro" id="IPR008278">
    <property type="entry name" value="4-PPantetheinyl_Trfase_dom"/>
</dbReference>
<dbReference type="InterPro" id="IPR037143">
    <property type="entry name" value="4-PPantetheinyl_Trfase_dom_sf"/>
</dbReference>
<dbReference type="InterPro" id="IPR002582">
    <property type="entry name" value="ACPS"/>
</dbReference>
<dbReference type="InterPro" id="IPR004568">
    <property type="entry name" value="Ppantetheine-prot_Trfase_dom"/>
</dbReference>
<dbReference type="NCBIfam" id="TIGR00516">
    <property type="entry name" value="acpS"/>
    <property type="match status" value="1"/>
</dbReference>
<dbReference type="NCBIfam" id="TIGR00556">
    <property type="entry name" value="pantethn_trn"/>
    <property type="match status" value="1"/>
</dbReference>
<dbReference type="Pfam" id="PF01648">
    <property type="entry name" value="ACPS"/>
    <property type="match status" value="1"/>
</dbReference>
<dbReference type="SUPFAM" id="SSF56214">
    <property type="entry name" value="4'-phosphopantetheinyl transferase"/>
    <property type="match status" value="1"/>
</dbReference>
<sequence length="125" mass="14114">MIYGIGTDLVDPARIAGSLERYGERFARRVLADSEWSEYVRQTRPEVFLAKRFAAKEAFSKAVGTGLRTPVMFGNIAVQHDTQGKPYFEFHQELIDWIGQRGIVSHHLSISDELTLASAFVVLEK</sequence>
<comment type="function">
    <text evidence="1">Transfers the 4'-phosphopantetheine moiety from coenzyme A to a Ser of acyl-carrier-protein.</text>
</comment>
<comment type="catalytic activity">
    <reaction evidence="1">
        <text>apo-[ACP] + CoA = holo-[ACP] + adenosine 3',5'-bisphosphate + H(+)</text>
        <dbReference type="Rhea" id="RHEA:12068"/>
        <dbReference type="Rhea" id="RHEA-COMP:9685"/>
        <dbReference type="Rhea" id="RHEA-COMP:9690"/>
        <dbReference type="ChEBI" id="CHEBI:15378"/>
        <dbReference type="ChEBI" id="CHEBI:29999"/>
        <dbReference type="ChEBI" id="CHEBI:57287"/>
        <dbReference type="ChEBI" id="CHEBI:58343"/>
        <dbReference type="ChEBI" id="CHEBI:64479"/>
        <dbReference type="EC" id="2.7.8.7"/>
    </reaction>
</comment>
<comment type="cofactor">
    <cofactor evidence="1">
        <name>Mg(2+)</name>
        <dbReference type="ChEBI" id="CHEBI:18420"/>
    </cofactor>
</comment>
<comment type="subcellular location">
    <subcellularLocation>
        <location evidence="1">Cytoplasm</location>
    </subcellularLocation>
</comment>
<comment type="similarity">
    <text evidence="1">Belongs to the P-Pant transferase superfamily. AcpS family.</text>
</comment>